<dbReference type="EC" id="7.1.1.2" evidence="1"/>
<dbReference type="EMBL" id="AY504589">
    <property type="protein sequence ID" value="AAS91454.1"/>
    <property type="molecule type" value="Genomic_DNA"/>
</dbReference>
<dbReference type="SMR" id="Q330A3"/>
<dbReference type="GO" id="GO:0005743">
    <property type="term" value="C:mitochondrial inner membrane"/>
    <property type="evidence" value="ECO:0000250"/>
    <property type="project" value="UniProtKB"/>
</dbReference>
<dbReference type="GO" id="GO:0008137">
    <property type="term" value="F:NADH dehydrogenase (ubiquinone) activity"/>
    <property type="evidence" value="ECO:0007669"/>
    <property type="project" value="UniProtKB-EC"/>
</dbReference>
<dbReference type="GO" id="GO:0006120">
    <property type="term" value="P:mitochondrial electron transport, NADH to ubiquinone"/>
    <property type="evidence" value="ECO:0007669"/>
    <property type="project" value="InterPro"/>
</dbReference>
<dbReference type="InterPro" id="IPR050175">
    <property type="entry name" value="Complex_I_Subunit_2"/>
</dbReference>
<dbReference type="InterPro" id="IPR010933">
    <property type="entry name" value="NADH_DH_su2_C"/>
</dbReference>
<dbReference type="InterPro" id="IPR003917">
    <property type="entry name" value="NADH_UbQ_OxRdtase_chain2"/>
</dbReference>
<dbReference type="InterPro" id="IPR001750">
    <property type="entry name" value="ND/Mrp_TM"/>
</dbReference>
<dbReference type="PANTHER" id="PTHR46552">
    <property type="entry name" value="NADH-UBIQUINONE OXIDOREDUCTASE CHAIN 2"/>
    <property type="match status" value="1"/>
</dbReference>
<dbReference type="PANTHER" id="PTHR46552:SF1">
    <property type="entry name" value="NADH-UBIQUINONE OXIDOREDUCTASE CHAIN 2"/>
    <property type="match status" value="1"/>
</dbReference>
<dbReference type="Pfam" id="PF06444">
    <property type="entry name" value="NADH_dehy_S2_C"/>
    <property type="match status" value="1"/>
</dbReference>
<dbReference type="Pfam" id="PF00361">
    <property type="entry name" value="Proton_antipo_M"/>
    <property type="match status" value="1"/>
</dbReference>
<dbReference type="PRINTS" id="PR01436">
    <property type="entry name" value="NADHDHGNASE2"/>
</dbReference>
<comment type="function">
    <text evidence="1">Core subunit of the mitochondrial membrane respiratory chain NADH dehydrogenase (Complex I) which catalyzes electron transfer from NADH through the respiratory chain, using ubiquinone as an electron acceptor. Essential for the catalytic activity and assembly of complex I.</text>
</comment>
<comment type="catalytic activity">
    <reaction evidence="1">
        <text>a ubiquinone + NADH + 5 H(+)(in) = a ubiquinol + NAD(+) + 4 H(+)(out)</text>
        <dbReference type="Rhea" id="RHEA:29091"/>
        <dbReference type="Rhea" id="RHEA-COMP:9565"/>
        <dbReference type="Rhea" id="RHEA-COMP:9566"/>
        <dbReference type="ChEBI" id="CHEBI:15378"/>
        <dbReference type="ChEBI" id="CHEBI:16389"/>
        <dbReference type="ChEBI" id="CHEBI:17976"/>
        <dbReference type="ChEBI" id="CHEBI:57540"/>
        <dbReference type="ChEBI" id="CHEBI:57945"/>
        <dbReference type="EC" id="7.1.1.2"/>
    </reaction>
</comment>
<comment type="subunit">
    <text evidence="1 2">Core subunit of respiratory chain NADH dehydrogenase (Complex I) which is composed of 45 different subunits. Interacts with TMEM242 (By similarity).</text>
</comment>
<comment type="subcellular location">
    <subcellularLocation>
        <location evidence="2">Mitochondrion inner membrane</location>
        <topology evidence="3">Multi-pass membrane protein</topology>
    </subcellularLocation>
</comment>
<comment type="similarity">
    <text evidence="4">Belongs to the complex I subunit 2 family.</text>
</comment>
<proteinExistence type="inferred from homology"/>
<name>NU2M_PARRP</name>
<gene>
    <name evidence="1" type="primary">MT-ND2</name>
    <name type="synonym">MTND2</name>
    <name type="synonym">NADH2</name>
    <name type="synonym">ND2</name>
</gene>
<protein>
    <recommendedName>
        <fullName evidence="1">NADH-ubiquinone oxidoreductase chain 2</fullName>
        <ecNumber evidence="1">7.1.1.2</ecNumber>
    </recommendedName>
    <alternativeName>
        <fullName>NADH dehydrogenase subunit 2</fullName>
    </alternativeName>
</protein>
<sequence length="347" mass="38841">MNPVVLTMILLTIMLGTVIVMTTSHWLLVWIGFEMNMLAIIPILMKKYNPRSMEASTKYFLTQATASMLLMLAIVINLIHSGQWSTTNPLDPTTSIIMTLALAMKLGLAPFHFWVPEVTQGIQLSSGLILLTWQKLAPMSILYQISPTINLHLLLLMSLTSILIGGWGGLNQTQLRKIMAYSSIAHMGWMTTIMIYNPTMALLNLTIYIILTTTTFMTFMMSSSTTTLSLSHLWNKMPLLTSAVLMTMLSLGGLPPLSGFSPKWMIIQELTKNNSIIMPTIMAITALLNLFFYMRLAYSTSLTMFPSTNNMKIKWQFNNSKSMNLLSPMIILSTLILPLSPMLALLE</sequence>
<geneLocation type="mitochondrion"/>
<organism>
    <name type="scientific">Paranyctimene raptor</name>
    <name type="common">Unstriped tube-nosed fruit bat</name>
    <dbReference type="NCBI Taxonomy" id="270785"/>
    <lineage>
        <taxon>Eukaryota</taxon>
        <taxon>Metazoa</taxon>
        <taxon>Chordata</taxon>
        <taxon>Craniata</taxon>
        <taxon>Vertebrata</taxon>
        <taxon>Euteleostomi</taxon>
        <taxon>Mammalia</taxon>
        <taxon>Eutheria</taxon>
        <taxon>Laurasiatheria</taxon>
        <taxon>Chiroptera</taxon>
        <taxon>Yinpterochiroptera</taxon>
        <taxon>Pteropodoidea</taxon>
        <taxon>Pteropodidae</taxon>
        <taxon>Nyctimeninae</taxon>
        <taxon>Paranyctimene</taxon>
    </lineage>
</organism>
<feature type="chain" id="PRO_0000256674" description="NADH-ubiquinone oxidoreductase chain 2">
    <location>
        <begin position="1"/>
        <end position="347"/>
    </location>
</feature>
<feature type="transmembrane region" description="Helical" evidence="3">
    <location>
        <begin position="3"/>
        <end position="23"/>
    </location>
</feature>
<feature type="transmembrane region" description="Helical" evidence="3">
    <location>
        <begin position="25"/>
        <end position="45"/>
    </location>
</feature>
<feature type="transmembrane region" description="Helical" evidence="3">
    <location>
        <begin position="59"/>
        <end position="79"/>
    </location>
</feature>
<feature type="transmembrane region" description="Helical" evidence="3">
    <location>
        <begin position="96"/>
        <end position="116"/>
    </location>
</feature>
<feature type="transmembrane region" description="Helical" evidence="3">
    <location>
        <begin position="122"/>
        <end position="142"/>
    </location>
</feature>
<feature type="transmembrane region" description="Helical" evidence="3">
    <location>
        <begin position="149"/>
        <end position="169"/>
    </location>
</feature>
<feature type="transmembrane region" description="Helical" evidence="3">
    <location>
        <begin position="178"/>
        <end position="198"/>
    </location>
</feature>
<feature type="transmembrane region" description="Helical" evidence="3">
    <location>
        <begin position="200"/>
        <end position="220"/>
    </location>
</feature>
<feature type="transmembrane region" description="Helical" evidence="3">
    <location>
        <begin position="237"/>
        <end position="257"/>
    </location>
</feature>
<feature type="transmembrane region" description="Helical" evidence="3">
    <location>
        <begin position="274"/>
        <end position="294"/>
    </location>
</feature>
<feature type="transmembrane region" description="Helical" evidence="3">
    <location>
        <begin position="325"/>
        <end position="345"/>
    </location>
</feature>
<accession>Q330A3</accession>
<evidence type="ECO:0000250" key="1">
    <source>
        <dbReference type="UniProtKB" id="P03891"/>
    </source>
</evidence>
<evidence type="ECO:0000250" key="2">
    <source>
        <dbReference type="UniProtKB" id="P03892"/>
    </source>
</evidence>
<evidence type="ECO:0000255" key="3"/>
<evidence type="ECO:0000305" key="4"/>
<keyword id="KW-0249">Electron transport</keyword>
<keyword id="KW-0472">Membrane</keyword>
<keyword id="KW-0496">Mitochondrion</keyword>
<keyword id="KW-0999">Mitochondrion inner membrane</keyword>
<keyword id="KW-0520">NAD</keyword>
<keyword id="KW-0679">Respiratory chain</keyword>
<keyword id="KW-1278">Translocase</keyword>
<keyword id="KW-0812">Transmembrane</keyword>
<keyword id="KW-1133">Transmembrane helix</keyword>
<keyword id="KW-0813">Transport</keyword>
<keyword id="KW-0830">Ubiquinone</keyword>
<reference key="1">
    <citation type="submission" date="2003-12" db="EMBL/GenBank/DDBJ databases">
        <title>Bats and birds: flying in the face of mtDNA evolutionary rates.</title>
        <authorList>
            <person name="Worthington Wilmer J.M."/>
            <person name="Schneider C.J."/>
            <person name="Sorenson M.D."/>
        </authorList>
    </citation>
    <scope>NUCLEOTIDE SEQUENCE [GENOMIC DNA]</scope>
    <source>
        <strain>Isolate 1</strain>
    </source>
</reference>